<proteinExistence type="inferred from homology"/>
<gene>
    <name evidence="1" type="primary">ispE</name>
    <name type="ordered locus">Rleg2_0521</name>
</gene>
<feature type="chain" id="PRO_1000092109" description="4-diphosphocytidyl-2-C-methyl-D-erythritol kinase">
    <location>
        <begin position="1"/>
        <end position="298"/>
    </location>
</feature>
<feature type="active site" evidence="1">
    <location>
        <position position="19"/>
    </location>
</feature>
<feature type="active site" evidence="1">
    <location>
        <position position="148"/>
    </location>
</feature>
<feature type="binding site" evidence="1">
    <location>
        <begin position="106"/>
        <end position="116"/>
    </location>
    <ligand>
        <name>ATP</name>
        <dbReference type="ChEBI" id="CHEBI:30616"/>
    </ligand>
</feature>
<accession>B5ZS25</accession>
<name>ISPE_RHILW</name>
<organism>
    <name type="scientific">Rhizobium leguminosarum bv. trifolii (strain WSM2304)</name>
    <dbReference type="NCBI Taxonomy" id="395492"/>
    <lineage>
        <taxon>Bacteria</taxon>
        <taxon>Pseudomonadati</taxon>
        <taxon>Pseudomonadota</taxon>
        <taxon>Alphaproteobacteria</taxon>
        <taxon>Hyphomicrobiales</taxon>
        <taxon>Rhizobiaceae</taxon>
        <taxon>Rhizobium/Agrobacterium group</taxon>
        <taxon>Rhizobium</taxon>
    </lineage>
</organism>
<evidence type="ECO:0000255" key="1">
    <source>
        <dbReference type="HAMAP-Rule" id="MF_00061"/>
    </source>
</evidence>
<sequence>MPEAGLAEAFGVTEEARAKINLALHVTGQRADGYHLLDMLVTFADCGDRLGFLPAQTDAFTLSGRFGEMLAGDGGTNLVLRARDLLREQFGALAFPVHIHLQKNLPVASGIGGGSADAAAALRGLMRLWGMSLPVEALASLALKLGADVPMCLESRPLIARGIGEEIEAVPDLPAFAMVLANPLKGVSTPEVFRRLTTKNNSALSLAPGLSGSAGWLAVIDAARNDLEPPARQLVPEIAVISAMLQARGALLTRMSGSGATCFGIFASMAEAQDAAAALHGERPDWYFQATETVSGGM</sequence>
<dbReference type="EC" id="2.7.1.148" evidence="1"/>
<dbReference type="EMBL" id="CP001191">
    <property type="protein sequence ID" value="ACI53818.1"/>
    <property type="molecule type" value="Genomic_DNA"/>
</dbReference>
<dbReference type="RefSeq" id="WP_012556750.1">
    <property type="nucleotide sequence ID" value="NC_011369.1"/>
</dbReference>
<dbReference type="SMR" id="B5ZS25"/>
<dbReference type="STRING" id="395492.Rleg2_0521"/>
<dbReference type="KEGG" id="rlt:Rleg2_0521"/>
<dbReference type="eggNOG" id="COG1947">
    <property type="taxonomic scope" value="Bacteria"/>
</dbReference>
<dbReference type="HOGENOM" id="CLU_053057_1_0_5"/>
<dbReference type="UniPathway" id="UPA00056">
    <property type="reaction ID" value="UER00094"/>
</dbReference>
<dbReference type="Proteomes" id="UP000008330">
    <property type="component" value="Chromosome"/>
</dbReference>
<dbReference type="GO" id="GO:0050515">
    <property type="term" value="F:4-(cytidine 5'-diphospho)-2-C-methyl-D-erythritol kinase activity"/>
    <property type="evidence" value="ECO:0007669"/>
    <property type="project" value="UniProtKB-UniRule"/>
</dbReference>
<dbReference type="GO" id="GO:0005524">
    <property type="term" value="F:ATP binding"/>
    <property type="evidence" value="ECO:0007669"/>
    <property type="project" value="UniProtKB-UniRule"/>
</dbReference>
<dbReference type="GO" id="GO:0019288">
    <property type="term" value="P:isopentenyl diphosphate biosynthetic process, methylerythritol 4-phosphate pathway"/>
    <property type="evidence" value="ECO:0007669"/>
    <property type="project" value="UniProtKB-UniRule"/>
</dbReference>
<dbReference type="GO" id="GO:0016114">
    <property type="term" value="P:terpenoid biosynthetic process"/>
    <property type="evidence" value="ECO:0007669"/>
    <property type="project" value="InterPro"/>
</dbReference>
<dbReference type="Gene3D" id="3.30.230.10">
    <property type="match status" value="1"/>
</dbReference>
<dbReference type="Gene3D" id="3.30.70.890">
    <property type="entry name" value="GHMP kinase, C-terminal domain"/>
    <property type="match status" value="1"/>
</dbReference>
<dbReference type="HAMAP" id="MF_00061">
    <property type="entry name" value="IspE"/>
    <property type="match status" value="1"/>
</dbReference>
<dbReference type="InterPro" id="IPR013750">
    <property type="entry name" value="GHMP_kinase_C_dom"/>
</dbReference>
<dbReference type="InterPro" id="IPR036554">
    <property type="entry name" value="GHMP_kinase_C_sf"/>
</dbReference>
<dbReference type="InterPro" id="IPR006204">
    <property type="entry name" value="GHMP_kinase_N_dom"/>
</dbReference>
<dbReference type="InterPro" id="IPR004424">
    <property type="entry name" value="IspE"/>
</dbReference>
<dbReference type="InterPro" id="IPR020568">
    <property type="entry name" value="Ribosomal_Su5_D2-typ_SF"/>
</dbReference>
<dbReference type="InterPro" id="IPR014721">
    <property type="entry name" value="Ribsml_uS5_D2-typ_fold_subgr"/>
</dbReference>
<dbReference type="NCBIfam" id="TIGR00154">
    <property type="entry name" value="ispE"/>
    <property type="match status" value="1"/>
</dbReference>
<dbReference type="NCBIfam" id="NF011202">
    <property type="entry name" value="PRK14608.1"/>
    <property type="match status" value="1"/>
</dbReference>
<dbReference type="PANTHER" id="PTHR43527">
    <property type="entry name" value="4-DIPHOSPHOCYTIDYL-2-C-METHYL-D-ERYTHRITOL KINASE, CHLOROPLASTIC"/>
    <property type="match status" value="1"/>
</dbReference>
<dbReference type="PANTHER" id="PTHR43527:SF2">
    <property type="entry name" value="4-DIPHOSPHOCYTIDYL-2-C-METHYL-D-ERYTHRITOL KINASE, CHLOROPLASTIC"/>
    <property type="match status" value="1"/>
</dbReference>
<dbReference type="Pfam" id="PF08544">
    <property type="entry name" value="GHMP_kinases_C"/>
    <property type="match status" value="1"/>
</dbReference>
<dbReference type="Pfam" id="PF00288">
    <property type="entry name" value="GHMP_kinases_N"/>
    <property type="match status" value="1"/>
</dbReference>
<dbReference type="PIRSF" id="PIRSF010376">
    <property type="entry name" value="IspE"/>
    <property type="match status" value="1"/>
</dbReference>
<dbReference type="SUPFAM" id="SSF55060">
    <property type="entry name" value="GHMP Kinase, C-terminal domain"/>
    <property type="match status" value="1"/>
</dbReference>
<dbReference type="SUPFAM" id="SSF54211">
    <property type="entry name" value="Ribosomal protein S5 domain 2-like"/>
    <property type="match status" value="1"/>
</dbReference>
<reference key="1">
    <citation type="journal article" date="2010" name="Stand. Genomic Sci.">
        <title>Complete genome sequence of Rhizobium leguminosarum bv trifolii strain WSM2304, an effective microsymbiont of the South American clover Trifolium polymorphum.</title>
        <authorList>
            <person name="Reeve W."/>
            <person name="O'Hara G."/>
            <person name="Chain P."/>
            <person name="Ardley J."/>
            <person name="Brau L."/>
            <person name="Nandesena K."/>
            <person name="Tiwari R."/>
            <person name="Malfatti S."/>
            <person name="Kiss H."/>
            <person name="Lapidus A."/>
            <person name="Copeland A."/>
            <person name="Nolan M."/>
            <person name="Land M."/>
            <person name="Ivanova N."/>
            <person name="Mavromatis K."/>
            <person name="Markowitz V."/>
            <person name="Kyrpides N."/>
            <person name="Melino V."/>
            <person name="Denton M."/>
            <person name="Yates R."/>
            <person name="Howieson J."/>
        </authorList>
    </citation>
    <scope>NUCLEOTIDE SEQUENCE [LARGE SCALE GENOMIC DNA]</scope>
    <source>
        <strain>WSM2304</strain>
    </source>
</reference>
<protein>
    <recommendedName>
        <fullName evidence="1">4-diphosphocytidyl-2-C-methyl-D-erythritol kinase</fullName>
        <shortName evidence="1">CMK</shortName>
        <ecNumber evidence="1">2.7.1.148</ecNumber>
    </recommendedName>
    <alternativeName>
        <fullName evidence="1">4-(cytidine-5'-diphospho)-2-C-methyl-D-erythritol kinase</fullName>
    </alternativeName>
</protein>
<comment type="function">
    <text evidence="1">Catalyzes the phosphorylation of the position 2 hydroxy group of 4-diphosphocytidyl-2C-methyl-D-erythritol.</text>
</comment>
<comment type="catalytic activity">
    <reaction evidence="1">
        <text>4-CDP-2-C-methyl-D-erythritol + ATP = 4-CDP-2-C-methyl-D-erythritol 2-phosphate + ADP + H(+)</text>
        <dbReference type="Rhea" id="RHEA:18437"/>
        <dbReference type="ChEBI" id="CHEBI:15378"/>
        <dbReference type="ChEBI" id="CHEBI:30616"/>
        <dbReference type="ChEBI" id="CHEBI:57823"/>
        <dbReference type="ChEBI" id="CHEBI:57919"/>
        <dbReference type="ChEBI" id="CHEBI:456216"/>
        <dbReference type="EC" id="2.7.1.148"/>
    </reaction>
</comment>
<comment type="pathway">
    <text evidence="1">Isoprenoid biosynthesis; isopentenyl diphosphate biosynthesis via DXP pathway; isopentenyl diphosphate from 1-deoxy-D-xylulose 5-phosphate: step 3/6.</text>
</comment>
<comment type="similarity">
    <text evidence="1">Belongs to the GHMP kinase family. IspE subfamily.</text>
</comment>
<keyword id="KW-0067">ATP-binding</keyword>
<keyword id="KW-0414">Isoprene biosynthesis</keyword>
<keyword id="KW-0418">Kinase</keyword>
<keyword id="KW-0547">Nucleotide-binding</keyword>
<keyword id="KW-1185">Reference proteome</keyword>
<keyword id="KW-0808">Transferase</keyword>